<accession>Q72RG8</accession>
<keyword id="KW-0001">2Fe-2S</keyword>
<keyword id="KW-0004">4Fe-4S</keyword>
<keyword id="KW-0093">Biotin biosynthesis</keyword>
<keyword id="KW-0408">Iron</keyword>
<keyword id="KW-0411">Iron-sulfur</keyword>
<keyword id="KW-0479">Metal-binding</keyword>
<keyword id="KW-0949">S-adenosyl-L-methionine</keyword>
<keyword id="KW-0808">Transferase</keyword>
<proteinExistence type="inferred from homology"/>
<dbReference type="EC" id="2.8.1.6" evidence="1"/>
<dbReference type="EMBL" id="AE016823">
    <property type="protein sequence ID" value="AAS70366.1"/>
    <property type="status" value="ALT_INIT"/>
    <property type="molecule type" value="Genomic_DNA"/>
</dbReference>
<dbReference type="RefSeq" id="WP_000921250.1">
    <property type="nucleotide sequence ID" value="NC_005823.1"/>
</dbReference>
<dbReference type="SMR" id="Q72RG8"/>
<dbReference type="GeneID" id="61141675"/>
<dbReference type="KEGG" id="lic:LIC_11777"/>
<dbReference type="HOGENOM" id="CLU_033172_2_1_12"/>
<dbReference type="UniPathway" id="UPA00078">
    <property type="reaction ID" value="UER00162"/>
</dbReference>
<dbReference type="Proteomes" id="UP000007037">
    <property type="component" value="Chromosome I"/>
</dbReference>
<dbReference type="GO" id="GO:0051537">
    <property type="term" value="F:2 iron, 2 sulfur cluster binding"/>
    <property type="evidence" value="ECO:0007669"/>
    <property type="project" value="UniProtKB-KW"/>
</dbReference>
<dbReference type="GO" id="GO:0051539">
    <property type="term" value="F:4 iron, 4 sulfur cluster binding"/>
    <property type="evidence" value="ECO:0007669"/>
    <property type="project" value="UniProtKB-KW"/>
</dbReference>
<dbReference type="GO" id="GO:0004076">
    <property type="term" value="F:biotin synthase activity"/>
    <property type="evidence" value="ECO:0007669"/>
    <property type="project" value="UniProtKB-UniRule"/>
</dbReference>
<dbReference type="GO" id="GO:0005506">
    <property type="term" value="F:iron ion binding"/>
    <property type="evidence" value="ECO:0007669"/>
    <property type="project" value="UniProtKB-UniRule"/>
</dbReference>
<dbReference type="GO" id="GO:0009102">
    <property type="term" value="P:biotin biosynthetic process"/>
    <property type="evidence" value="ECO:0007669"/>
    <property type="project" value="UniProtKB-UniRule"/>
</dbReference>
<dbReference type="CDD" id="cd01335">
    <property type="entry name" value="Radical_SAM"/>
    <property type="match status" value="1"/>
</dbReference>
<dbReference type="FunFam" id="3.20.20.70:FF:000026">
    <property type="entry name" value="Biotin synthase"/>
    <property type="match status" value="1"/>
</dbReference>
<dbReference type="Gene3D" id="3.20.20.70">
    <property type="entry name" value="Aldolase class I"/>
    <property type="match status" value="1"/>
</dbReference>
<dbReference type="HAMAP" id="MF_01694">
    <property type="entry name" value="BioB"/>
    <property type="match status" value="1"/>
</dbReference>
<dbReference type="InterPro" id="IPR013785">
    <property type="entry name" value="Aldolase_TIM"/>
</dbReference>
<dbReference type="InterPro" id="IPR010722">
    <property type="entry name" value="BATS_dom"/>
</dbReference>
<dbReference type="InterPro" id="IPR002684">
    <property type="entry name" value="Biotin_synth/BioAB"/>
</dbReference>
<dbReference type="InterPro" id="IPR024177">
    <property type="entry name" value="Biotin_synthase"/>
</dbReference>
<dbReference type="InterPro" id="IPR006638">
    <property type="entry name" value="Elp3/MiaA/NifB-like_rSAM"/>
</dbReference>
<dbReference type="InterPro" id="IPR007197">
    <property type="entry name" value="rSAM"/>
</dbReference>
<dbReference type="NCBIfam" id="TIGR00433">
    <property type="entry name" value="bioB"/>
    <property type="match status" value="1"/>
</dbReference>
<dbReference type="PANTHER" id="PTHR22976">
    <property type="entry name" value="BIOTIN SYNTHASE"/>
    <property type="match status" value="1"/>
</dbReference>
<dbReference type="PANTHER" id="PTHR22976:SF2">
    <property type="entry name" value="BIOTIN SYNTHASE, MITOCHONDRIAL"/>
    <property type="match status" value="1"/>
</dbReference>
<dbReference type="Pfam" id="PF06968">
    <property type="entry name" value="BATS"/>
    <property type="match status" value="1"/>
</dbReference>
<dbReference type="Pfam" id="PF04055">
    <property type="entry name" value="Radical_SAM"/>
    <property type="match status" value="1"/>
</dbReference>
<dbReference type="PIRSF" id="PIRSF001619">
    <property type="entry name" value="Biotin_synth"/>
    <property type="match status" value="1"/>
</dbReference>
<dbReference type="SFLD" id="SFLDG01060">
    <property type="entry name" value="BATS_domain_containing"/>
    <property type="match status" value="1"/>
</dbReference>
<dbReference type="SFLD" id="SFLDG01278">
    <property type="entry name" value="biotin_synthase_like"/>
    <property type="match status" value="1"/>
</dbReference>
<dbReference type="SMART" id="SM00876">
    <property type="entry name" value="BATS"/>
    <property type="match status" value="1"/>
</dbReference>
<dbReference type="SMART" id="SM00729">
    <property type="entry name" value="Elp3"/>
    <property type="match status" value="1"/>
</dbReference>
<dbReference type="SUPFAM" id="SSF102114">
    <property type="entry name" value="Radical SAM enzymes"/>
    <property type="match status" value="1"/>
</dbReference>
<dbReference type="PROSITE" id="PS51918">
    <property type="entry name" value="RADICAL_SAM"/>
    <property type="match status" value="1"/>
</dbReference>
<protein>
    <recommendedName>
        <fullName evidence="1">Biotin synthase</fullName>
        <ecNumber evidence="1">2.8.1.6</ecNumber>
    </recommendedName>
</protein>
<feature type="chain" id="PRO_0000381447" description="Biotin synthase">
    <location>
        <begin position="1"/>
        <end position="351"/>
    </location>
</feature>
<feature type="domain" description="Radical SAM core" evidence="2">
    <location>
        <begin position="48"/>
        <end position="265"/>
    </location>
</feature>
<feature type="binding site" evidence="1">
    <location>
        <position position="63"/>
    </location>
    <ligand>
        <name>[4Fe-4S] cluster</name>
        <dbReference type="ChEBI" id="CHEBI:49883"/>
        <note>4Fe-4S-S-AdoMet</note>
    </ligand>
</feature>
<feature type="binding site" evidence="1">
    <location>
        <position position="67"/>
    </location>
    <ligand>
        <name>[4Fe-4S] cluster</name>
        <dbReference type="ChEBI" id="CHEBI:49883"/>
        <note>4Fe-4S-S-AdoMet</note>
    </ligand>
</feature>
<feature type="binding site" evidence="1">
    <location>
        <position position="70"/>
    </location>
    <ligand>
        <name>[4Fe-4S] cluster</name>
        <dbReference type="ChEBI" id="CHEBI:49883"/>
        <note>4Fe-4S-S-AdoMet</note>
    </ligand>
</feature>
<feature type="binding site" evidence="1">
    <location>
        <position position="107"/>
    </location>
    <ligand>
        <name>[2Fe-2S] cluster</name>
        <dbReference type="ChEBI" id="CHEBI:190135"/>
    </ligand>
</feature>
<feature type="binding site" evidence="1">
    <location>
        <position position="139"/>
    </location>
    <ligand>
        <name>[2Fe-2S] cluster</name>
        <dbReference type="ChEBI" id="CHEBI:190135"/>
    </ligand>
</feature>
<feature type="binding site" evidence="1">
    <location>
        <position position="199"/>
    </location>
    <ligand>
        <name>[2Fe-2S] cluster</name>
        <dbReference type="ChEBI" id="CHEBI:190135"/>
    </ligand>
</feature>
<feature type="binding site" evidence="1">
    <location>
        <position position="269"/>
    </location>
    <ligand>
        <name>[2Fe-2S] cluster</name>
        <dbReference type="ChEBI" id="CHEBI:190135"/>
    </ligand>
</feature>
<gene>
    <name evidence="1" type="primary">bioB</name>
    <name type="ordered locus">LIC_11777</name>
</gene>
<name>BIOB_LEPIC</name>
<evidence type="ECO:0000255" key="1">
    <source>
        <dbReference type="HAMAP-Rule" id="MF_01694"/>
    </source>
</evidence>
<evidence type="ECO:0000255" key="2">
    <source>
        <dbReference type="PROSITE-ProRule" id="PRU01266"/>
    </source>
</evidence>
<evidence type="ECO:0000305" key="3"/>
<organism>
    <name type="scientific">Leptospira interrogans serogroup Icterohaemorrhagiae serovar copenhageni (strain Fiocruz L1-130)</name>
    <dbReference type="NCBI Taxonomy" id="267671"/>
    <lineage>
        <taxon>Bacteria</taxon>
        <taxon>Pseudomonadati</taxon>
        <taxon>Spirochaetota</taxon>
        <taxon>Spirochaetia</taxon>
        <taxon>Leptospirales</taxon>
        <taxon>Leptospiraceae</taxon>
        <taxon>Leptospira</taxon>
    </lineage>
</organism>
<comment type="function">
    <text evidence="1">Catalyzes the conversion of dethiobiotin (DTB) to biotin by the insertion of a sulfur atom into dethiobiotin via a radical-based mechanism.</text>
</comment>
<comment type="catalytic activity">
    <reaction evidence="1">
        <text>(4R,5S)-dethiobiotin + (sulfur carrier)-SH + 2 reduced [2Fe-2S]-[ferredoxin] + 2 S-adenosyl-L-methionine = (sulfur carrier)-H + biotin + 2 5'-deoxyadenosine + 2 L-methionine + 2 oxidized [2Fe-2S]-[ferredoxin]</text>
        <dbReference type="Rhea" id="RHEA:22060"/>
        <dbReference type="Rhea" id="RHEA-COMP:10000"/>
        <dbReference type="Rhea" id="RHEA-COMP:10001"/>
        <dbReference type="Rhea" id="RHEA-COMP:14737"/>
        <dbReference type="Rhea" id="RHEA-COMP:14739"/>
        <dbReference type="ChEBI" id="CHEBI:17319"/>
        <dbReference type="ChEBI" id="CHEBI:29917"/>
        <dbReference type="ChEBI" id="CHEBI:33737"/>
        <dbReference type="ChEBI" id="CHEBI:33738"/>
        <dbReference type="ChEBI" id="CHEBI:57586"/>
        <dbReference type="ChEBI" id="CHEBI:57844"/>
        <dbReference type="ChEBI" id="CHEBI:59789"/>
        <dbReference type="ChEBI" id="CHEBI:64428"/>
        <dbReference type="ChEBI" id="CHEBI:149473"/>
        <dbReference type="EC" id="2.8.1.6"/>
    </reaction>
</comment>
<comment type="cofactor">
    <cofactor evidence="1">
        <name>[4Fe-4S] cluster</name>
        <dbReference type="ChEBI" id="CHEBI:49883"/>
    </cofactor>
    <text evidence="1">Binds 1 [4Fe-4S] cluster. The cluster is coordinated with 3 cysteines and an exchangeable S-adenosyl-L-methionine.</text>
</comment>
<comment type="cofactor">
    <cofactor evidence="1">
        <name>[2Fe-2S] cluster</name>
        <dbReference type="ChEBI" id="CHEBI:190135"/>
    </cofactor>
    <text evidence="1">Binds 1 [2Fe-2S] cluster. The cluster is coordinated with 3 cysteines and 1 arginine.</text>
</comment>
<comment type="pathway">
    <text evidence="1">Cofactor biosynthesis; biotin biosynthesis; biotin from 7,8-diaminononanoate: step 2/2.</text>
</comment>
<comment type="subunit">
    <text evidence="1">Homodimer.</text>
</comment>
<comment type="similarity">
    <text evidence="1">Belongs to the radical SAM superfamily. Biotin synthase family.</text>
</comment>
<comment type="sequence caution" evidence="3">
    <conflict type="erroneous initiation">
        <sequence resource="EMBL-CDS" id="AAS70366"/>
    </conflict>
    <text>Extended N-terminus.</text>
</comment>
<sequence length="351" mass="39251">MLKTSEKIFSETPSIITKEEGLKILNGVIPLTTCLDKAFQERNRYFENKVRIHILDNIKNGYCPEDCGYCAQRKNANSGVQEYPMKSEQEIYEDAVQAKKNGAYRFCMVTSGTGPNRLTTEKLASTIQRITDELNMKVCLSAGLLDIEKAQVLKEAGLDRYNHNLNTSENHYSEICDTHTYLQRAQTLDSVSKAGIGMCSGVIVGMGESFQDIVDVAFQLKSFRVISIPVNFFIPVKGHTIKNPSVLTPELCVRILCMFRLINPDSEIRIAAGREGHLRSLSATALFAANSLFSSGYLNVKGSEILETVAMIRDAGFVPELSNGEILPENFGTESFYSEKNFPELYKFKKF</sequence>
<reference key="1">
    <citation type="journal article" date="2004" name="J. Bacteriol.">
        <title>Comparative genomics of two Leptospira interrogans serovars reveals novel insights into physiology and pathogenesis.</title>
        <authorList>
            <person name="Nascimento A.L.T.O."/>
            <person name="Ko A.I."/>
            <person name="Martins E.A.L."/>
            <person name="Monteiro-Vitorello C.B."/>
            <person name="Ho P.L."/>
            <person name="Haake D.A."/>
            <person name="Verjovski-Almeida S."/>
            <person name="Hartskeerl R.A."/>
            <person name="Marques M.V."/>
            <person name="Oliveira M.C."/>
            <person name="Menck C.F.M."/>
            <person name="Leite L.C.C."/>
            <person name="Carrer H."/>
            <person name="Coutinho L.L."/>
            <person name="Degrave W.M."/>
            <person name="Dellagostin O.A."/>
            <person name="El-Dorry H."/>
            <person name="Ferro E.S."/>
            <person name="Ferro M.I.T."/>
            <person name="Furlan L.R."/>
            <person name="Gamberini M."/>
            <person name="Giglioti E.A."/>
            <person name="Goes-Neto A."/>
            <person name="Goldman G.H."/>
            <person name="Goldman M.H.S."/>
            <person name="Harakava R."/>
            <person name="Jeronimo S.M.B."/>
            <person name="Junqueira-de-Azevedo I.L.M."/>
            <person name="Kimura E.T."/>
            <person name="Kuramae E.E."/>
            <person name="Lemos E.G.M."/>
            <person name="Lemos M.V.F."/>
            <person name="Marino C.L."/>
            <person name="Nunes L.R."/>
            <person name="de Oliveira R.C."/>
            <person name="Pereira G.G."/>
            <person name="Reis M.S."/>
            <person name="Schriefer A."/>
            <person name="Siqueira W.J."/>
            <person name="Sommer P."/>
            <person name="Tsai S.M."/>
            <person name="Simpson A.J.G."/>
            <person name="Ferro J.A."/>
            <person name="Camargo L.E.A."/>
            <person name="Kitajima J.P."/>
            <person name="Setubal J.C."/>
            <person name="Van Sluys M.A."/>
        </authorList>
    </citation>
    <scope>NUCLEOTIDE SEQUENCE [LARGE SCALE GENOMIC DNA]</scope>
    <source>
        <strain>Fiocruz L1-130</strain>
    </source>
</reference>